<protein>
    <recommendedName>
        <fullName evidence="11">ATP-dependent Clp protease proteolytic subunit 6, chloroplastic</fullName>
        <ecNumber>3.4.21.92</ecNumber>
    </recommendedName>
    <alternativeName>
        <fullName evidence="11">Endopeptidase ClpP6</fullName>
        <shortName>nClpP6</shortName>
    </alternativeName>
    <alternativeName>
        <fullName>nClpP1</fullName>
    </alternativeName>
</protein>
<sequence>MAGLAISPPLGLSFSSRTRNPKPTSFLSHNQRNPIRRIVSALQSPYGDSLKAGLSSNVSGSPIKIDNKAPRFGVIEAKKGNPPVMPSVMTPGGPLDLSSVLFRNRIIFIGQPINAQVAQRVISQLVTLASIDDKSDILMYLNCPGGSTYSVLAIYDCMSWIKPKVGTVAFGVAASQGALLLAGGEKGMRYAMPNTRVMIHQPQTGCGGHVEDVRRQVNEAIEARQKIDRMYAAFTGQPLEKVQQYTERDRFLSASEALEFGLIDGLLETEY</sequence>
<evidence type="ECO:0000250" key="1"/>
<evidence type="ECO:0000256" key="2">
    <source>
        <dbReference type="SAM" id="MobiDB-lite"/>
    </source>
</evidence>
<evidence type="ECO:0000269" key="3">
    <source>
    </source>
</evidence>
<evidence type="ECO:0000269" key="4">
    <source>
    </source>
</evidence>
<evidence type="ECO:0000269" key="5">
    <source>
    </source>
</evidence>
<evidence type="ECO:0000269" key="6">
    <source>
    </source>
</evidence>
<evidence type="ECO:0000269" key="7">
    <source>
    </source>
</evidence>
<evidence type="ECO:0000269" key="8">
    <source>
    </source>
</evidence>
<evidence type="ECO:0000269" key="9">
    <source>
    </source>
</evidence>
<evidence type="ECO:0000269" key="10">
    <source>
    </source>
</evidence>
<evidence type="ECO:0000303" key="11">
    <source>
    </source>
</evidence>
<evidence type="ECO:0000305" key="12"/>
<evidence type="ECO:0000312" key="13">
    <source>
        <dbReference type="Araport" id="AT1G11750"/>
    </source>
</evidence>
<evidence type="ECO:0000312" key="14">
    <source>
        <dbReference type="EMBL" id="AAD30248.1"/>
    </source>
</evidence>
<gene>
    <name evidence="11" type="primary">CLPP6</name>
    <name type="synonym">NCLPP1</name>
    <name type="synonym">NCLPP6</name>
    <name evidence="13" type="ordered locus">At1g11750</name>
    <name evidence="14" type="ORF">F25C20.10</name>
</gene>
<proteinExistence type="evidence at protein level"/>
<dbReference type="EC" id="3.4.21.92"/>
<dbReference type="EMBL" id="AF016621">
    <property type="protein sequence ID" value="AAB99906.1"/>
    <property type="molecule type" value="mRNA"/>
</dbReference>
<dbReference type="EMBL" id="AC007296">
    <property type="protein sequence ID" value="AAD30248.1"/>
    <property type="molecule type" value="Genomic_DNA"/>
</dbReference>
<dbReference type="EMBL" id="CP002684">
    <property type="protein sequence ID" value="AEE28778.1"/>
    <property type="molecule type" value="Genomic_DNA"/>
</dbReference>
<dbReference type="EMBL" id="AF348580">
    <property type="protein sequence ID" value="AAK15551.1"/>
    <property type="molecule type" value="mRNA"/>
</dbReference>
<dbReference type="EMBL" id="AK229049">
    <property type="protein sequence ID" value="BAF00932.1"/>
    <property type="molecule type" value="mRNA"/>
</dbReference>
<dbReference type="EMBL" id="AY087248">
    <property type="protein sequence ID" value="AAM64804.1"/>
    <property type="molecule type" value="mRNA"/>
</dbReference>
<dbReference type="PIR" id="C86251">
    <property type="entry name" value="C86251"/>
</dbReference>
<dbReference type="RefSeq" id="NP_563893.1">
    <molecule id="Q9SAA2-1"/>
    <property type="nucleotide sequence ID" value="NM_101047.3"/>
</dbReference>
<dbReference type="SMR" id="Q9SAA2"/>
<dbReference type="BioGRID" id="22959">
    <property type="interactions" value="4"/>
</dbReference>
<dbReference type="FunCoup" id="Q9SAA2">
    <property type="interactions" value="1466"/>
</dbReference>
<dbReference type="IntAct" id="Q9SAA2">
    <property type="interactions" value="2"/>
</dbReference>
<dbReference type="STRING" id="3702.Q9SAA2"/>
<dbReference type="MEROPS" id="S14.006"/>
<dbReference type="PaxDb" id="3702-AT1G11750.2"/>
<dbReference type="ProteomicsDB" id="241065">
    <molecule id="Q9SAA2-1"/>
</dbReference>
<dbReference type="EnsemblPlants" id="AT1G11750.1">
    <molecule id="Q9SAA2-1"/>
    <property type="protein sequence ID" value="AT1G11750.1"/>
    <property type="gene ID" value="AT1G11750"/>
</dbReference>
<dbReference type="GeneID" id="837719"/>
<dbReference type="Gramene" id="AT1G11750.1">
    <molecule id="Q9SAA2-1"/>
    <property type="protein sequence ID" value="AT1G11750.1"/>
    <property type="gene ID" value="AT1G11750"/>
</dbReference>
<dbReference type="KEGG" id="ath:AT1G11750"/>
<dbReference type="Araport" id="AT1G11750"/>
<dbReference type="TAIR" id="AT1G11750">
    <property type="gene designation" value="CLPP6"/>
</dbReference>
<dbReference type="eggNOG" id="KOG0840">
    <property type="taxonomic scope" value="Eukaryota"/>
</dbReference>
<dbReference type="HOGENOM" id="CLU_058707_6_4_1"/>
<dbReference type="InParanoid" id="Q9SAA2"/>
<dbReference type="OMA" id="ADMDRDK"/>
<dbReference type="OrthoDB" id="2017408at2759"/>
<dbReference type="PhylomeDB" id="Q9SAA2"/>
<dbReference type="PRO" id="PR:Q9SAA2"/>
<dbReference type="Proteomes" id="UP000006548">
    <property type="component" value="Chromosome 1"/>
</dbReference>
<dbReference type="ExpressionAtlas" id="Q9SAA2">
    <property type="expression patterns" value="baseline and differential"/>
</dbReference>
<dbReference type="GO" id="GO:0009570">
    <property type="term" value="C:chloroplast stroma"/>
    <property type="evidence" value="ECO:0007669"/>
    <property type="project" value="UniProtKB-SubCell"/>
</dbReference>
<dbReference type="GO" id="GO:0004176">
    <property type="term" value="F:ATP-dependent peptidase activity"/>
    <property type="evidence" value="ECO:0007669"/>
    <property type="project" value="InterPro"/>
</dbReference>
<dbReference type="GO" id="GO:0004252">
    <property type="term" value="F:serine-type endopeptidase activity"/>
    <property type="evidence" value="ECO:0007669"/>
    <property type="project" value="UniProtKB-EC"/>
</dbReference>
<dbReference type="GO" id="GO:0006508">
    <property type="term" value="P:proteolysis"/>
    <property type="evidence" value="ECO:0007669"/>
    <property type="project" value="UniProtKB-KW"/>
</dbReference>
<dbReference type="CDD" id="cd07017">
    <property type="entry name" value="S14_ClpP_2"/>
    <property type="match status" value="1"/>
</dbReference>
<dbReference type="FunFam" id="3.90.226.10:FF:000035">
    <property type="entry name" value="ATP-dependent Clp protease proteolytic subunit"/>
    <property type="match status" value="1"/>
</dbReference>
<dbReference type="Gene3D" id="3.90.226.10">
    <property type="entry name" value="2-enoyl-CoA Hydratase, Chain A, domain 1"/>
    <property type="match status" value="1"/>
</dbReference>
<dbReference type="HAMAP" id="MF_00444">
    <property type="entry name" value="ClpP"/>
    <property type="match status" value="1"/>
</dbReference>
<dbReference type="InterPro" id="IPR001907">
    <property type="entry name" value="ClpP"/>
</dbReference>
<dbReference type="InterPro" id="IPR029045">
    <property type="entry name" value="ClpP/crotonase-like_dom_sf"/>
</dbReference>
<dbReference type="InterPro" id="IPR023562">
    <property type="entry name" value="ClpP/TepA"/>
</dbReference>
<dbReference type="InterPro" id="IPR033135">
    <property type="entry name" value="ClpP_His_AS"/>
</dbReference>
<dbReference type="PANTHER" id="PTHR10381">
    <property type="entry name" value="ATP-DEPENDENT CLP PROTEASE PROTEOLYTIC SUBUNIT"/>
    <property type="match status" value="1"/>
</dbReference>
<dbReference type="PANTHER" id="PTHR10381:SF8">
    <property type="entry name" value="ATP-DEPENDENT CLP PROTEASE PROTEOLYTIC SUBUNIT 6, CHLOROPLASTIC"/>
    <property type="match status" value="1"/>
</dbReference>
<dbReference type="Pfam" id="PF00574">
    <property type="entry name" value="CLP_protease"/>
    <property type="match status" value="1"/>
</dbReference>
<dbReference type="PRINTS" id="PR00127">
    <property type="entry name" value="CLPPROTEASEP"/>
</dbReference>
<dbReference type="SUPFAM" id="SSF52096">
    <property type="entry name" value="ClpP/crotonase"/>
    <property type="match status" value="1"/>
</dbReference>
<dbReference type="PROSITE" id="PS00382">
    <property type="entry name" value="CLP_PROTEASE_HIS"/>
    <property type="match status" value="1"/>
</dbReference>
<reference key="1">
    <citation type="journal article" date="1998" name="Planta">
        <title>Clp protease complexes and their diversity in chloroplasts.</title>
        <authorList>
            <person name="Sokolenko A."/>
            <person name="Lerbs-Mache S."/>
            <person name="Altschmied L."/>
            <person name="Herrmann R.G."/>
        </authorList>
    </citation>
    <scope>NUCLEOTIDE SEQUENCE [MRNA]</scope>
    <scope>SUBUNIT</scope>
    <scope>SUBCELLULAR LOCATION</scope>
</reference>
<reference key="2">
    <citation type="journal article" date="2002" name="Physiol. Plantarum">
        <title>Characterization of chloroplast Clp proteins in Arabidopsis: localization, tissue specificity and stress responses.</title>
        <authorList>
            <person name="Zheng B."/>
            <person name="Halperin T."/>
            <person name="Hruskova-Heidingsfeldova O."/>
            <person name="Adam Z."/>
            <person name="Clarke A.K."/>
        </authorList>
    </citation>
    <scope>NUCLEOTIDE SEQUENCE [MRNA]</scope>
    <scope>TISSUE SPECIFICITY</scope>
    <scope>INDUCTION</scope>
    <scope>SUBCELLULAR LOCATION</scope>
    <source>
        <strain>cv. Columbia</strain>
        <tissue>Seedling</tissue>
    </source>
</reference>
<reference key="3">
    <citation type="journal article" date="2000" name="Nature">
        <title>Sequence and analysis of chromosome 1 of the plant Arabidopsis thaliana.</title>
        <authorList>
            <person name="Theologis A."/>
            <person name="Ecker J.R."/>
            <person name="Palm C.J."/>
            <person name="Federspiel N.A."/>
            <person name="Kaul S."/>
            <person name="White O."/>
            <person name="Alonso J."/>
            <person name="Altafi H."/>
            <person name="Araujo R."/>
            <person name="Bowman C.L."/>
            <person name="Brooks S.Y."/>
            <person name="Buehler E."/>
            <person name="Chan A."/>
            <person name="Chao Q."/>
            <person name="Chen H."/>
            <person name="Cheuk R.F."/>
            <person name="Chin C.W."/>
            <person name="Chung M.K."/>
            <person name="Conn L."/>
            <person name="Conway A.B."/>
            <person name="Conway A.R."/>
            <person name="Creasy T.H."/>
            <person name="Dewar K."/>
            <person name="Dunn P."/>
            <person name="Etgu P."/>
            <person name="Feldblyum T.V."/>
            <person name="Feng J.-D."/>
            <person name="Fong B."/>
            <person name="Fujii C.Y."/>
            <person name="Gill J.E."/>
            <person name="Goldsmith A.D."/>
            <person name="Haas B."/>
            <person name="Hansen N.F."/>
            <person name="Hughes B."/>
            <person name="Huizar L."/>
            <person name="Hunter J.L."/>
            <person name="Jenkins J."/>
            <person name="Johnson-Hopson C."/>
            <person name="Khan S."/>
            <person name="Khaykin E."/>
            <person name="Kim C.J."/>
            <person name="Koo H.L."/>
            <person name="Kremenetskaia I."/>
            <person name="Kurtz D.B."/>
            <person name="Kwan A."/>
            <person name="Lam B."/>
            <person name="Langin-Hooper S."/>
            <person name="Lee A."/>
            <person name="Lee J.M."/>
            <person name="Lenz C.A."/>
            <person name="Li J.H."/>
            <person name="Li Y.-P."/>
            <person name="Lin X."/>
            <person name="Liu S.X."/>
            <person name="Liu Z.A."/>
            <person name="Luros J.S."/>
            <person name="Maiti R."/>
            <person name="Marziali A."/>
            <person name="Militscher J."/>
            <person name="Miranda M."/>
            <person name="Nguyen M."/>
            <person name="Nierman W.C."/>
            <person name="Osborne B.I."/>
            <person name="Pai G."/>
            <person name="Peterson J."/>
            <person name="Pham P.K."/>
            <person name="Rizzo M."/>
            <person name="Rooney T."/>
            <person name="Rowley D."/>
            <person name="Sakano H."/>
            <person name="Salzberg S.L."/>
            <person name="Schwartz J.R."/>
            <person name="Shinn P."/>
            <person name="Southwick A.M."/>
            <person name="Sun H."/>
            <person name="Tallon L.J."/>
            <person name="Tambunga G."/>
            <person name="Toriumi M.J."/>
            <person name="Town C.D."/>
            <person name="Utterback T."/>
            <person name="Van Aken S."/>
            <person name="Vaysberg M."/>
            <person name="Vysotskaia V.S."/>
            <person name="Walker M."/>
            <person name="Wu D."/>
            <person name="Yu G."/>
            <person name="Fraser C.M."/>
            <person name="Venter J.C."/>
            <person name="Davis R.W."/>
        </authorList>
    </citation>
    <scope>NUCLEOTIDE SEQUENCE [LARGE SCALE GENOMIC DNA]</scope>
    <source>
        <strain>cv. Columbia</strain>
    </source>
</reference>
<reference key="4">
    <citation type="journal article" date="2017" name="Plant J.">
        <title>Araport11: a complete reannotation of the Arabidopsis thaliana reference genome.</title>
        <authorList>
            <person name="Cheng C.Y."/>
            <person name="Krishnakumar V."/>
            <person name="Chan A.P."/>
            <person name="Thibaud-Nissen F."/>
            <person name="Schobel S."/>
            <person name="Town C.D."/>
        </authorList>
    </citation>
    <scope>GENOME REANNOTATION</scope>
    <source>
        <strain>cv. Columbia</strain>
    </source>
</reference>
<reference key="5">
    <citation type="journal article" date="2003" name="Science">
        <title>Empirical analysis of transcriptional activity in the Arabidopsis genome.</title>
        <authorList>
            <person name="Yamada K."/>
            <person name="Lim J."/>
            <person name="Dale J.M."/>
            <person name="Chen H."/>
            <person name="Shinn P."/>
            <person name="Palm C.J."/>
            <person name="Southwick A.M."/>
            <person name="Wu H.C."/>
            <person name="Kim C.J."/>
            <person name="Nguyen M."/>
            <person name="Pham P.K."/>
            <person name="Cheuk R.F."/>
            <person name="Karlin-Newmann G."/>
            <person name="Liu S.X."/>
            <person name="Lam B."/>
            <person name="Sakano H."/>
            <person name="Wu T."/>
            <person name="Yu G."/>
            <person name="Miranda M."/>
            <person name="Quach H.L."/>
            <person name="Tripp M."/>
            <person name="Chang C.H."/>
            <person name="Lee J.M."/>
            <person name="Toriumi M.J."/>
            <person name="Chan M.M."/>
            <person name="Tang C.C."/>
            <person name="Onodera C.S."/>
            <person name="Deng J.M."/>
            <person name="Akiyama K."/>
            <person name="Ansari Y."/>
            <person name="Arakawa T."/>
            <person name="Banh J."/>
            <person name="Banno F."/>
            <person name="Bowser L."/>
            <person name="Brooks S.Y."/>
            <person name="Carninci P."/>
            <person name="Chao Q."/>
            <person name="Choy N."/>
            <person name="Enju A."/>
            <person name="Goldsmith A.D."/>
            <person name="Gurjal M."/>
            <person name="Hansen N.F."/>
            <person name="Hayashizaki Y."/>
            <person name="Johnson-Hopson C."/>
            <person name="Hsuan V.W."/>
            <person name="Iida K."/>
            <person name="Karnes M."/>
            <person name="Khan S."/>
            <person name="Koesema E."/>
            <person name="Ishida J."/>
            <person name="Jiang P.X."/>
            <person name="Jones T."/>
            <person name="Kawai J."/>
            <person name="Kamiya A."/>
            <person name="Meyers C."/>
            <person name="Nakajima M."/>
            <person name="Narusaka M."/>
            <person name="Seki M."/>
            <person name="Sakurai T."/>
            <person name="Satou M."/>
            <person name="Tamse R."/>
            <person name="Vaysberg M."/>
            <person name="Wallender E.K."/>
            <person name="Wong C."/>
            <person name="Yamamura Y."/>
            <person name="Yuan S."/>
            <person name="Shinozaki K."/>
            <person name="Davis R.W."/>
            <person name="Theologis A."/>
            <person name="Ecker J.R."/>
        </authorList>
    </citation>
    <scope>NUCLEOTIDE SEQUENCE [LARGE SCALE MRNA]</scope>
    <source>
        <strain>cv. Columbia</strain>
    </source>
</reference>
<reference key="6">
    <citation type="submission" date="2006-07" db="EMBL/GenBank/DDBJ databases">
        <title>Large-scale analysis of RIKEN Arabidopsis full-length (RAFL) cDNAs.</title>
        <authorList>
            <person name="Totoki Y."/>
            <person name="Seki M."/>
            <person name="Ishida J."/>
            <person name="Nakajima M."/>
            <person name="Enju A."/>
            <person name="Kamiya A."/>
            <person name="Narusaka M."/>
            <person name="Shin-i T."/>
            <person name="Nakagawa M."/>
            <person name="Sakamoto N."/>
            <person name="Oishi K."/>
            <person name="Kohara Y."/>
            <person name="Kobayashi M."/>
            <person name="Toyoda A."/>
            <person name="Sakaki Y."/>
            <person name="Sakurai T."/>
            <person name="Iida K."/>
            <person name="Akiyama K."/>
            <person name="Satou M."/>
            <person name="Toyoda T."/>
            <person name="Konagaya A."/>
            <person name="Carninci P."/>
            <person name="Kawai J."/>
            <person name="Hayashizaki Y."/>
            <person name="Shinozaki K."/>
        </authorList>
    </citation>
    <scope>NUCLEOTIDE SEQUENCE [LARGE SCALE MRNA]</scope>
    <source>
        <strain>cv. Columbia</strain>
    </source>
</reference>
<reference key="7">
    <citation type="submission" date="2002-03" db="EMBL/GenBank/DDBJ databases">
        <title>Full-length cDNA from Arabidopsis thaliana.</title>
        <authorList>
            <person name="Brover V.V."/>
            <person name="Troukhan M.E."/>
            <person name="Alexandrov N.A."/>
            <person name="Lu Y.-P."/>
            <person name="Flavell R.B."/>
            <person name="Feldmann K.A."/>
        </authorList>
    </citation>
    <scope>NUCLEOTIDE SEQUENCE [LARGE SCALE MRNA]</scope>
</reference>
<reference key="8">
    <citation type="journal article" date="2001" name="J. Biol. Chem.">
        <title>Identification of a 350-kDa ClpP protease complex with 10 different Clp isoforms in chloroplasts of Arabidopsis thaliana.</title>
        <authorList>
            <person name="Peltier J.-B."/>
            <person name="Ytterberg J."/>
            <person name="Liberles D.A."/>
            <person name="Roepstorff P."/>
            <person name="van Wijk K.J."/>
        </authorList>
    </citation>
    <scope>PROTEIN SEQUENCE OF 106-120</scope>
    <scope>SUBUNIT</scope>
    <scope>IDENTIFICATION BY MASS SPECTROMETRY</scope>
</reference>
<reference key="9">
    <citation type="journal article" date="1999" name="Plant Cell Physiol.">
        <title>Identification of clp genes expressed in senescing Arabidopsis leaves.</title>
        <authorList>
            <person name="Nakabayashi K."/>
            <person name="Ito M."/>
            <person name="Kiyosue T."/>
            <person name="Shinozaki K."/>
            <person name="Watanabe A."/>
        </authorList>
    </citation>
    <scope>INDUCTION</scope>
</reference>
<reference key="10">
    <citation type="journal article" date="2001" name="Plant Physiol.">
        <title>Chloroplast and mitochondrial proteases in Arabidopsis. A proposed nomenclature.</title>
        <authorList>
            <person name="Adam Z."/>
            <person name="Adamska I."/>
            <person name="Nakabayashi K."/>
            <person name="Ostersetzer O."/>
            <person name="Haussuhl K."/>
            <person name="Manuell A."/>
            <person name="Zheng B."/>
            <person name="Vallon O."/>
            <person name="Rodermel S.R."/>
            <person name="Shinozaki K."/>
            <person name="Clarke A.K."/>
        </authorList>
    </citation>
    <scope>GENE FAMILY</scope>
    <scope>NOMENCLATURE</scope>
</reference>
<reference key="11">
    <citation type="journal article" date="2004" name="J. Biol. Chem.">
        <title>Clp protease complexes from photosynthetic and non-photosynthetic plastids and mitochondria of plants, their predicted three-dimensional structures, and functional implications.</title>
        <authorList>
            <person name="Peltier J.-B."/>
            <person name="Ripoll D.R."/>
            <person name="Friso G."/>
            <person name="Rudella A."/>
            <person name="Cai Y."/>
            <person name="Ytterberg J."/>
            <person name="Giacomelli L."/>
            <person name="Pillardy J."/>
            <person name="van Wijk K.J."/>
        </authorList>
    </citation>
    <scope>IDENTIFICATION BY MASS SPECTROMETRY</scope>
    <scope>SUBUNIT</scope>
    <scope>SUBCELLULAR LOCATION</scope>
    <scope>3D-STRUCTURE MODELING</scope>
</reference>
<reference key="12">
    <citation type="journal article" date="2005" name="Physiol. Plantarum">
        <title>The ATP-dependent Clp protease in chloroplasts of higher plants.</title>
        <authorList>
            <person name="Clarke A.K."/>
            <person name="MacDonald T.M."/>
            <person name="Sjoegren L.L."/>
        </authorList>
    </citation>
    <scope>NOMENCLATURE</scope>
</reference>
<reference key="13">
    <citation type="journal article" date="2006" name="Plant Cell">
        <title>Downregulation of ClpR2 leads to reduced accumulation of the ClpPRS protease complex and defects in chloroplast biogenesis in Arabidopsis.</title>
        <authorList>
            <person name="Rudella A."/>
            <person name="Friso G."/>
            <person name="Alonso J.M."/>
            <person name="Ecker J.R."/>
            <person name="van Wijk K.J."/>
        </authorList>
    </citation>
    <scope>IDENTIFICATION BY MASS SPECTROMETRY</scope>
    <scope>SUBUNIT</scope>
</reference>
<reference key="14">
    <citation type="journal article" date="2006" name="Plant Cell">
        <title>Structural and functional insights into the chloroplast ATP-dependent Clp protease in Arabidopsis.</title>
        <authorList>
            <person name="Sjoegren L.L.E."/>
            <person name="Stanne T.M."/>
            <person name="Zheng B."/>
            <person name="Sutinen S."/>
            <person name="Clarke A.K."/>
        </authorList>
    </citation>
    <scope>FUNCTION</scope>
    <scope>SUBUNIT</scope>
</reference>
<reference key="15">
    <citation type="journal article" date="2011" name="Plant Cell">
        <title>Subunit stoichiometry, evolution, and functional implications of an asymmetric plant plastid ClpP/R protease complex in Arabidopsis.</title>
        <authorList>
            <person name="Olinares P.D."/>
            <person name="Kim J."/>
            <person name="Davis J.I."/>
            <person name="van Wijk K.J."/>
        </authorList>
    </citation>
    <scope>IDENTIFICATION BY MASS SPECTROMETRY</scope>
    <scope>SUBUNIT</scope>
</reference>
<reference key="16">
    <citation type="journal article" date="2012" name="Physiol. Plantarum">
        <title>The chloroplast ATP-dependent Clp protease in vascular plants - new dimensions and future challenges.</title>
        <authorList>
            <person name="Clarke A.K."/>
        </authorList>
    </citation>
    <scope>REVIEW</scope>
</reference>
<comment type="function">
    <text evidence="1 8">Cleaves peptides in various proteins in a process that requires ATP hydrolysis. Has a chymotrypsin-like activity. Plays a major role in the degradation of misfolded proteins (By similarity). Essential protein required for chloroplast development and integrity.</text>
</comment>
<comment type="catalytic activity">
    <reaction>
        <text>Hydrolysis of proteins to small peptides in the presence of ATP and magnesium. alpha-casein is the usual test substrate. In the absence of ATP, only oligopeptides shorter than five residues are hydrolyzed (such as succinyl-Leu-Tyr-|-NHMec, and Leu-Tyr-Leu-|-Tyr-Trp, in which cleavage of the -Tyr-|-Leu- and -Tyr-|-Trp bonds also occurs).</text>
        <dbReference type="EC" id="3.4.21.92"/>
    </reaction>
</comment>
<comment type="subunit">
    <text evidence="4 6 7 8 9 10">Component of the chloroplastic Clp protease core complex which consist of at least 16 proteins: CLPP4 (3 copies), CLPP5 (3 copies), CLPR4 (2 copies), ClpP1 (1 copy), CLPP6 (1 copy), CLPR2 (1 copy), CLPT1 (1 copy), CLPT2 (1 copy) and 3 copies of CLPP3 and/or CLPR1 and/or CLPR3 (PubMed:11278690, PubMed:14593120, PubMed:16766689, PubMed:16980539, PubMed:9951729). The core complex is organized in two heptameric rings, one containing CLPP3,4,5,6 in a 1:2:3:1 ratio and the other CLPP1 and CLPR1,2,3,4 in a 3:1:1:1:1 ratio (PubMed:21712416).</text>
</comment>
<comment type="subcellular location">
    <subcellularLocation>
        <location evidence="5 6 10">Plastid</location>
        <location evidence="5 6 10">Chloroplast stroma</location>
    </subcellularLocation>
</comment>
<comment type="alternative products">
    <event type="alternative splicing"/>
    <isoform>
        <id>Q9SAA2-1</id>
        <name>1</name>
        <sequence type="displayed"/>
    </isoform>
    <text>A number of isoforms are produced. According to EST sequences.</text>
</comment>
<comment type="tissue specificity">
    <text evidence="5">Mostly expressed in leaves. Also detected in stems, and to a lower extent, in roots (at protein level).</text>
</comment>
<comment type="induction">
    <text evidence="3 5">Repressed in darkness. Induced during cold acclimation (at protein level).</text>
</comment>
<comment type="similarity">
    <text evidence="12">Belongs to the peptidase S14 family.</text>
</comment>
<organism>
    <name type="scientific">Arabidopsis thaliana</name>
    <name type="common">Mouse-ear cress</name>
    <dbReference type="NCBI Taxonomy" id="3702"/>
    <lineage>
        <taxon>Eukaryota</taxon>
        <taxon>Viridiplantae</taxon>
        <taxon>Streptophyta</taxon>
        <taxon>Embryophyta</taxon>
        <taxon>Tracheophyta</taxon>
        <taxon>Spermatophyta</taxon>
        <taxon>Magnoliopsida</taxon>
        <taxon>eudicotyledons</taxon>
        <taxon>Gunneridae</taxon>
        <taxon>Pentapetalae</taxon>
        <taxon>rosids</taxon>
        <taxon>malvids</taxon>
        <taxon>Brassicales</taxon>
        <taxon>Brassicaceae</taxon>
        <taxon>Camelineae</taxon>
        <taxon>Arabidopsis</taxon>
    </lineage>
</organism>
<keyword id="KW-0025">Alternative splicing</keyword>
<keyword id="KW-0150">Chloroplast</keyword>
<keyword id="KW-0903">Direct protein sequencing</keyword>
<keyword id="KW-0378">Hydrolase</keyword>
<keyword id="KW-0934">Plastid</keyword>
<keyword id="KW-0645">Protease</keyword>
<keyword id="KW-1185">Reference proteome</keyword>
<keyword id="KW-0720">Serine protease</keyword>
<keyword id="KW-0809">Transit peptide</keyword>
<feature type="transit peptide" description="Chloroplast" evidence="12">
    <location>
        <begin position="1"/>
        <end position="77"/>
    </location>
</feature>
<feature type="chain" id="PRO_0000308981" description="ATP-dependent Clp protease proteolytic subunit 6, chloroplastic">
    <location>
        <begin position="78"/>
        <end position="271"/>
    </location>
</feature>
<feature type="region of interest" description="Disordered" evidence="2">
    <location>
        <begin position="1"/>
        <end position="30"/>
    </location>
</feature>
<feature type="compositionally biased region" description="Polar residues" evidence="2">
    <location>
        <begin position="13"/>
        <end position="30"/>
    </location>
</feature>
<feature type="active site" description="Nucleophile" evidence="1">
    <location>
        <position position="175"/>
    </location>
</feature>
<feature type="active site" evidence="1">
    <location>
        <position position="200"/>
    </location>
</feature>
<feature type="sequence conflict" description="In Ref. 1." evidence="12" ref="1">
    <original>P</original>
    <variation>S</variation>
    <location>
        <position position="144"/>
    </location>
</feature>
<feature type="sequence conflict" description="In Ref. 2; AAB99906." evidence="12" ref="2">
    <original>A</original>
    <variation>T</variation>
    <location>
        <position position="153"/>
    </location>
</feature>
<feature type="sequence conflict" description="In Ref. 2; AAB99906." evidence="12" ref="2">
    <original>LL</original>
    <variation>FF</variation>
    <location>
        <begin position="179"/>
        <end position="180"/>
    </location>
</feature>
<feature type="sequence conflict" description="In Ref. 2; AAB99906." evidence="12" ref="2">
    <original>L</original>
    <variation>F</variation>
    <location>
        <position position="258"/>
    </location>
</feature>
<name>CLPP6_ARATH</name>
<accession>Q9SAA2</accession>
<accession>O48891</accession>